<keyword id="KW-0002">3D-structure</keyword>
<keyword id="KW-0007">Acetylation</keyword>
<keyword id="KW-0963">Cytoplasm</keyword>
<keyword id="KW-0903">Direct protein sequencing</keyword>
<keyword id="KW-0396">Initiation factor</keyword>
<keyword id="KW-0539">Nucleus</keyword>
<keyword id="KW-0597">Phosphoprotein</keyword>
<keyword id="KW-0648">Protein biosynthesis</keyword>
<keyword id="KW-1267">Proteomics identification</keyword>
<keyword id="KW-1185">Reference proteome</keyword>
<comment type="function">
    <text evidence="2 13 15 16 17 21 22">Component of the eukaryotic translation initiation factor 3 (eIF-3) complex, which is required for several steps in the initiation of protein synthesis (PubMed:17581632, PubMed:25849773, PubMed:27462815). The eIF-3 complex associates with the 40S ribosome and facilitates the recruitment of eIF-1, eIF-1A, eIF-2:GTP:methionyl-tRNAi and eIF-5 to form the 43S pre-initiation complex (43S PIC). The eIF-3 complex stimulates mRNA recruitment to the 43S PIC and scanning of the mRNA for AUG recognition. The eIF-3 complex is also required for disassembly and recycling of post-termination ribosomal complexes and subsequently prevents premature joining of the 40S and 60S ribosomal subunits prior to initiation (PubMed:17581632). The eIF-3 complex specifically targets and initiates translation of a subset of mRNAs involved in cell proliferation, including cell cycling, differentiation and apoptosis, and uses different modes of RNA stem-loop binding to exert either translational activation or repression (PubMed:25849773). Required for nonsense-mediated mRNA decay (NMD); may act in conjunction with UPF2 to divert mRNAs from translation to the NMD pathway (PubMed:17468741). May interact with MCM7 and EPAS1 and regulate the proteasome-mediated degradation of these proteins (PubMed:17310990, PubMed:17324924).</text>
</comment>
<comment type="subunit">
    <text evidence="2 4 5 6 7 8 10 11 12 13 14 15 16 19 20 21 23 24">Component of the eukaryotic translation initiation factor 3 (eIF-3) complex, which is composed of 13 subunits: EIF3A, EIF3B, EIF3C, EIF3D, EIF3E, EIF3F, EIF3G, EIF3H, EIF3I, EIF3J, EIF3K, EIF3L and EIF3M. The eIF-3 complex appears to include 3 stable modules: module A is composed of EIF3A, EIF3B, EIF3G and EIF3I; module B is composed of EIF3F, EIF3H, and EIF3M; and module C is composed of EIF3C, EIF3D, EIF3E, EIF3K and EIF3L. EIF3C of module C binds EIF3B of module A and EIF3H of module B, thereby linking the three modules. EIF3J is a labile subunit that binds to the eIF-3 complex via EIF3B. The eIF-3 complex interacts with RPS6KB1 under conditions of nutrient depletion. Mitogenic stimulation leads to binding and activation of a complex composed of MTOR and RPTOR, leading to phosphorylation and release of RPS6KB1 and binding of EIF4B to eIF-3. Interacts with COPS3, COPS6, COPS7 (COPS7A or COPS7B), EIF4G1, EPAS1, MCM7, NCBP1, PSMC6, TRIM27 and UPF2. Interacts with the HTLV-1 protein Tax-1. Interacts with IFIT1 and IFIT2 (PubMed:16023166, PubMed:16973618). Interacts with BZW2/5MP1 (PubMed:21745818).</text>
</comment>
<comment type="interaction">
    <interactant intactId="EBI-347740">
        <id>P60228</id>
    </interactant>
    <interactant intactId="EBI-10216552">
        <id>Q8IY42</id>
        <label>C4orf19</label>
    </interactant>
    <organismsDiffer>false</organismsDiffer>
    <experiments>4</experiments>
</comment>
<comment type="interaction">
    <interactant intactId="EBI-347740">
        <id>P60228</id>
    </interactant>
    <interactant intactId="EBI-2622890">
        <id>P04233</id>
        <label>CD74</label>
    </interactant>
    <organismsDiffer>false</organismsDiffer>
    <experiments>2</experiments>
</comment>
<comment type="interaction">
    <interactant intactId="EBI-347740">
        <id>P60228</id>
    </interactant>
    <interactant intactId="EBI-6875961">
        <id>P02489</id>
        <label>CRYAA</label>
    </interactant>
    <organismsDiffer>false</organismsDiffer>
    <experiments>3</experiments>
</comment>
<comment type="interaction">
    <interactant intactId="EBI-347740">
        <id>P60228</id>
    </interactant>
    <interactant intactId="EBI-2807346">
        <id>Q8IY21</id>
        <label>DDX60</label>
    </interactant>
    <organismsDiffer>false</organismsDiffer>
    <experiments>2</experiments>
</comment>
<comment type="interaction">
    <interactant intactId="EBI-347740">
        <id>P60228</id>
    </interactant>
    <interactant intactId="EBI-366617">
        <id>Q14152</id>
        <label>EIF3A</label>
    </interactant>
    <organismsDiffer>false</organismsDiffer>
    <experiments>18</experiments>
</comment>
<comment type="interaction">
    <interactant intactId="EBI-347740">
        <id>P60228</id>
    </interactant>
    <interactant intactId="EBI-366696">
        <id>P55884</id>
        <label>EIF3B</label>
    </interactant>
    <organismsDiffer>false</organismsDiffer>
    <experiments>9</experiments>
</comment>
<comment type="interaction">
    <interactant intactId="EBI-347740">
        <id>P60228</id>
    </interactant>
    <interactant intactId="EBI-353741">
        <id>Q99613</id>
        <label>EIF3C</label>
    </interactant>
    <organismsDiffer>false</organismsDiffer>
    <experiments>16</experiments>
</comment>
<comment type="interaction">
    <interactant intactId="EBI-347740">
        <id>P60228</id>
    </interactant>
    <interactant intactId="EBI-353818">
        <id>O15371</id>
        <label>EIF3D</label>
    </interactant>
    <organismsDiffer>false</organismsDiffer>
    <experiments>8</experiments>
</comment>
<comment type="interaction">
    <interactant intactId="EBI-347740">
        <id>P60228</id>
    </interactant>
    <interactant intactId="EBI-354344">
        <id>Q9UBQ5</id>
        <label>EIF3K</label>
    </interactant>
    <organismsDiffer>false</organismsDiffer>
    <experiments>9</experiments>
</comment>
<comment type="interaction">
    <interactant intactId="EBI-347740">
        <id>P60228</id>
    </interactant>
    <interactant intactId="EBI-373519">
        <id>Q9Y262</id>
        <label>EIF3L</label>
    </interactant>
    <organismsDiffer>false</organismsDiffer>
    <experiments>9</experiments>
</comment>
<comment type="interaction">
    <interactant intactId="EBI-347740">
        <id>P60228</id>
    </interactant>
    <interactant intactId="EBI-447470">
        <id>Q99814</id>
        <label>EPAS1</label>
    </interactant>
    <organismsDiffer>false</organismsDiffer>
    <experiments>10</experiments>
</comment>
<comment type="interaction">
    <interactant intactId="EBI-347740">
        <id>P60228</id>
    </interactant>
    <interactant intactId="EBI-12135243">
        <id>O95208-2</id>
        <label>EPN2</label>
    </interactant>
    <organismsDiffer>false</organismsDiffer>
    <experiments>3</experiments>
</comment>
<comment type="interaction">
    <interactant intactId="EBI-347740">
        <id>P60228</id>
    </interactant>
    <interactant intactId="EBI-746674">
        <id>Q9HC44</id>
        <label>GPBP1L1</label>
    </interactant>
    <organismsDiffer>false</organismsDiffer>
    <experiments>4</experiments>
</comment>
<comment type="interaction">
    <interactant intactId="EBI-347740">
        <id>P60228</id>
    </interactant>
    <interactant intactId="EBI-8561769">
        <id>Q5SUL5</id>
        <label>HLA-A</label>
    </interactant>
    <organismsDiffer>false</organismsDiffer>
    <experiments>3</experiments>
</comment>
<comment type="interaction">
    <interactant intactId="EBI-347740">
        <id>P60228</id>
    </interactant>
    <interactant intactId="EBI-10258659">
        <id>Q86U28</id>
        <label>ISCA2</label>
    </interactant>
    <organismsDiffer>false</organismsDiffer>
    <experiments>3</experiments>
</comment>
<comment type="interaction">
    <interactant intactId="EBI-347740">
        <id>P60228</id>
    </interactant>
    <interactant intactId="EBI-399080">
        <id>Q92993</id>
        <label>KAT5</label>
    </interactant>
    <organismsDiffer>false</organismsDiffer>
    <experiments>3</experiments>
</comment>
<comment type="interaction">
    <interactant intactId="EBI-347740">
        <id>P60228</id>
    </interactant>
    <interactant intactId="EBI-10981970">
        <id>Q5T749</id>
        <label>KPRP</label>
    </interactant>
    <organismsDiffer>false</organismsDiffer>
    <experiments>3</experiments>
</comment>
<comment type="interaction">
    <interactant intactId="EBI-347740">
        <id>P60228</id>
    </interactant>
    <interactant intactId="EBI-11742507">
        <id>Q8TAP4-4</id>
        <label>LMO3</label>
    </interactant>
    <organismsDiffer>false</organismsDiffer>
    <experiments>3</experiments>
</comment>
<comment type="interaction">
    <interactant intactId="EBI-347740">
        <id>P60228</id>
    </interactant>
    <interactant intactId="EBI-2801965">
        <id>Q5JXC2</id>
        <label>MIIP</label>
    </interactant>
    <organismsDiffer>false</organismsDiffer>
    <experiments>3</experiments>
</comment>
<comment type="interaction">
    <interactant intactId="EBI-347740">
        <id>P60228</id>
    </interactant>
    <interactant intactId="EBI-2857471">
        <id>Q6NTE8</id>
        <label>MRNIP</label>
    </interactant>
    <organismsDiffer>false</organismsDiffer>
    <experiments>3</experiments>
</comment>
<comment type="interaction">
    <interactant intactId="EBI-347740">
        <id>P60228</id>
    </interactant>
    <interactant intactId="EBI-78579">
        <id>P06748</id>
        <label>NPM1</label>
    </interactant>
    <organismsDiffer>false</organismsDiffer>
    <experiments>3</experiments>
</comment>
<comment type="interaction">
    <interactant intactId="EBI-347740">
        <id>P60228</id>
    </interactant>
    <interactant intactId="EBI-1383528">
        <id>P17252</id>
        <label>PRKCA</label>
    </interactant>
    <organismsDiffer>false</organismsDiffer>
    <experiments>3</experiments>
</comment>
<comment type="interaction">
    <interactant intactId="EBI-347740">
        <id>P60228</id>
    </interactant>
    <interactant intactId="EBI-747225">
        <id>Q59EK9</id>
        <label>RUNDC3A</label>
    </interactant>
    <organismsDiffer>false</organismsDiffer>
    <experiments>4</experiments>
</comment>
<comment type="interaction">
    <interactant intactId="EBI-347740">
        <id>P60228</id>
    </interactant>
    <interactant intactId="EBI-11957366">
        <id>Q59EK9-3</id>
        <label>RUNDC3A</label>
    </interactant>
    <organismsDiffer>false</organismsDiffer>
    <experiments>3</experiments>
</comment>
<comment type="interaction">
    <interactant intactId="EBI-347740">
        <id>P60228</id>
    </interactant>
    <interactant intactId="EBI-9090795">
        <id>Q15047-2</id>
        <label>SETDB1</label>
    </interactant>
    <organismsDiffer>false</organismsDiffer>
    <experiments>3</experiments>
</comment>
<comment type="interaction">
    <interactant intactId="EBI-347740">
        <id>P60228</id>
    </interactant>
    <interactant intactId="EBI-719493">
        <id>P14373</id>
        <label>TRIM27</label>
    </interactant>
    <organismsDiffer>false</organismsDiffer>
    <experiments>7</experiments>
</comment>
<comment type="interaction">
    <interactant intactId="EBI-347740">
        <id>P60228</id>
    </interactant>
    <interactant intactId="EBI-359832">
        <id>P61981</id>
        <label>YWHAG</label>
    </interactant>
    <organismsDiffer>false</organismsDiffer>
    <experiments>3</experiments>
</comment>
<comment type="interaction">
    <interactant intactId="EBI-347740">
        <id>P60228</id>
    </interactant>
    <interactant intactId="EBI-524753">
        <id>Q8IUH5</id>
        <label>ZDHHC17</label>
    </interactant>
    <organismsDiffer>false</organismsDiffer>
    <experiments>2</experiments>
</comment>
<comment type="interaction">
    <interactant intactId="EBI-347740">
        <id>P60228</id>
    </interactant>
    <interactant intactId="EBI-12006434">
        <id>Q96MX3</id>
        <label>ZNF48</label>
    </interactant>
    <organismsDiffer>false</organismsDiffer>
    <experiments>3</experiments>
</comment>
<comment type="interaction">
    <interactant intactId="EBI-347740">
        <id>P60228</id>
    </interactant>
    <interactant intactId="EBI-6248094">
        <id>Q9Q2G4</id>
        <label>ORF</label>
    </interactant>
    <organismsDiffer>true</organismsDiffer>
    <experiments>5</experiments>
</comment>
<comment type="subcellular location">
    <subcellularLocation>
        <location>Cytoplasm</location>
    </subcellularLocation>
    <subcellularLocation>
        <location>Nucleus</location>
        <location>PML body</location>
    </subcellularLocation>
</comment>
<comment type="tissue specificity">
    <text evidence="23 24">Ubiquitously expressed. Expressed at highest levels in appendix, lymph, pancreas, skeletal muscle, spleen and thymus.</text>
</comment>
<comment type="mass spectrometry"/>
<comment type="mass spectrometry"/>
<comment type="similarity">
    <text evidence="2">Belongs to the eIF-3 subunit E family.</text>
</comment>
<name>EIF3E_HUMAN</name>
<organism>
    <name type="scientific">Homo sapiens</name>
    <name type="common">Human</name>
    <dbReference type="NCBI Taxonomy" id="9606"/>
    <lineage>
        <taxon>Eukaryota</taxon>
        <taxon>Metazoa</taxon>
        <taxon>Chordata</taxon>
        <taxon>Craniata</taxon>
        <taxon>Vertebrata</taxon>
        <taxon>Euteleostomi</taxon>
        <taxon>Mammalia</taxon>
        <taxon>Eutheria</taxon>
        <taxon>Euarchontoglires</taxon>
        <taxon>Primates</taxon>
        <taxon>Haplorrhini</taxon>
        <taxon>Catarrhini</taxon>
        <taxon>Hominidae</taxon>
        <taxon>Homo</taxon>
    </lineage>
</organism>
<feature type="initiator methionine" description="Removed" evidence="2 14 25 27 29 30">
    <location>
        <position position="1"/>
    </location>
</feature>
<feature type="chain" id="PRO_0000123515" description="Eukaryotic translation initiation factor 3 subunit E">
    <location>
        <begin position="2"/>
        <end position="445"/>
    </location>
</feature>
<feature type="domain" description="PCI" evidence="3">
    <location>
        <begin position="221"/>
        <end position="398"/>
    </location>
</feature>
<feature type="region of interest" description="Sufficient for interaction with EPAS1" evidence="15">
    <location>
        <begin position="4"/>
        <end position="128"/>
    </location>
</feature>
<feature type="region of interest" description="Sufficient for interaction with TRIM27" evidence="4">
    <location>
        <begin position="9"/>
        <end position="195"/>
    </location>
</feature>
<feature type="region of interest" description="Sufficient for interaction with MCM7" evidence="13">
    <location>
        <begin position="351"/>
        <end position="445"/>
    </location>
</feature>
<feature type="modified residue" description="N-acetylalanine" evidence="2 14 25 27 29 30">
    <location>
        <position position="2"/>
    </location>
</feature>
<feature type="modified residue" description="Phosphoserine" evidence="26 28 31">
    <location>
        <position position="399"/>
    </location>
</feature>
<feature type="modified residue" description="Phosphothreonine" evidence="1">
    <location>
        <position position="439"/>
    </location>
</feature>
<feature type="modified residue" description="Phosphoserine" evidence="32">
    <location>
        <position position="442"/>
    </location>
</feature>
<feature type="modified residue" description="Phosphotyrosine" evidence="1">
    <location>
        <position position="445"/>
    </location>
</feature>
<feature type="sequence variant" id="VAR_046480" description="In dbSNP:rs17856554." evidence="9">
    <original>A</original>
    <variation>V</variation>
    <location>
        <position position="185"/>
    </location>
</feature>
<feature type="mutagenesis site" description="Promotes nuclear accumulation." evidence="18">
    <original>L</original>
    <variation>D</variation>
    <location>
        <position position="312"/>
    </location>
</feature>
<feature type="helix" evidence="34">
    <location>
        <begin position="22"/>
        <end position="27"/>
    </location>
</feature>
<feature type="strand" evidence="33">
    <location>
        <begin position="35"/>
        <end position="37"/>
    </location>
</feature>
<feature type="helix" evidence="33">
    <location>
        <begin position="38"/>
        <end position="41"/>
    </location>
</feature>
<feature type="helix" evidence="33">
    <location>
        <begin position="50"/>
        <end position="54"/>
    </location>
</feature>
<feature type="helix" evidence="33">
    <location>
        <begin position="62"/>
        <end position="65"/>
    </location>
</feature>
<feature type="helix" evidence="33">
    <location>
        <begin position="67"/>
        <end position="69"/>
    </location>
</feature>
<feature type="strand" evidence="33">
    <location>
        <begin position="73"/>
        <end position="75"/>
    </location>
</feature>
<feature type="helix" evidence="33">
    <location>
        <begin position="77"/>
        <end position="82"/>
    </location>
</feature>
<feature type="turn" evidence="33">
    <location>
        <begin position="85"/>
        <end position="88"/>
    </location>
</feature>
<feature type="turn" evidence="33">
    <location>
        <begin position="94"/>
        <end position="96"/>
    </location>
</feature>
<feature type="helix" evidence="33">
    <location>
        <begin position="97"/>
        <end position="105"/>
    </location>
</feature>
<feature type="helix" evidence="33">
    <location>
        <begin position="106"/>
        <end position="108"/>
    </location>
</feature>
<feature type="turn" evidence="33">
    <location>
        <begin position="109"/>
        <end position="112"/>
    </location>
</feature>
<feature type="helix" evidence="34">
    <location>
        <begin position="113"/>
        <end position="116"/>
    </location>
</feature>
<feature type="turn" evidence="34">
    <location>
        <begin position="117"/>
        <end position="119"/>
    </location>
</feature>
<feature type="strand" evidence="34">
    <location>
        <begin position="122"/>
        <end position="124"/>
    </location>
</feature>
<feature type="turn" evidence="33">
    <location>
        <begin position="126"/>
        <end position="128"/>
    </location>
</feature>
<feature type="helix" evidence="33">
    <location>
        <begin position="129"/>
        <end position="137"/>
    </location>
</feature>
<feature type="turn" evidence="33">
    <location>
        <begin position="148"/>
        <end position="152"/>
    </location>
</feature>
<feature type="turn" evidence="34">
    <location>
        <begin position="162"/>
        <end position="164"/>
    </location>
</feature>
<feature type="helix" evidence="33">
    <location>
        <begin position="165"/>
        <end position="176"/>
    </location>
</feature>
<feature type="turn" evidence="33">
    <location>
        <begin position="177"/>
        <end position="180"/>
    </location>
</feature>
<feature type="helix" evidence="33">
    <location>
        <begin position="182"/>
        <end position="194"/>
    </location>
</feature>
<feature type="helix" evidence="33">
    <location>
        <begin position="204"/>
        <end position="217"/>
    </location>
</feature>
<feature type="strand" evidence="33">
    <location>
        <begin position="222"/>
        <end position="224"/>
    </location>
</feature>
<feature type="helix" evidence="33">
    <location>
        <begin position="225"/>
        <end position="228"/>
    </location>
</feature>
<feature type="helix" evidence="33">
    <location>
        <begin position="229"/>
        <end position="231"/>
    </location>
</feature>
<feature type="turn" evidence="33">
    <location>
        <begin position="232"/>
        <end position="234"/>
    </location>
</feature>
<feature type="helix" evidence="33">
    <location>
        <begin position="238"/>
        <end position="244"/>
    </location>
</feature>
<feature type="turn" evidence="33">
    <location>
        <begin position="245"/>
        <end position="248"/>
    </location>
</feature>
<feature type="helix" evidence="33">
    <location>
        <begin position="251"/>
        <end position="263"/>
    </location>
</feature>
<feature type="turn" evidence="33">
    <location>
        <begin position="271"/>
        <end position="275"/>
    </location>
</feature>
<feature type="helix" evidence="33">
    <location>
        <begin position="276"/>
        <end position="279"/>
    </location>
</feature>
<feature type="turn" evidence="33">
    <location>
        <begin position="280"/>
        <end position="284"/>
    </location>
</feature>
<feature type="strand" evidence="34">
    <location>
        <begin position="287"/>
        <end position="289"/>
    </location>
</feature>
<feature type="turn" evidence="33">
    <location>
        <begin position="291"/>
        <end position="296"/>
    </location>
</feature>
<feature type="turn" evidence="33">
    <location>
        <begin position="299"/>
        <end position="301"/>
    </location>
</feature>
<feature type="helix" evidence="33">
    <location>
        <begin position="305"/>
        <end position="307"/>
    </location>
</feature>
<feature type="strand" evidence="33">
    <location>
        <begin position="308"/>
        <end position="312"/>
    </location>
</feature>
<feature type="helix" evidence="33">
    <location>
        <begin position="315"/>
        <end position="320"/>
    </location>
</feature>
<feature type="strand" evidence="33">
    <location>
        <begin position="325"/>
        <end position="328"/>
    </location>
</feature>
<feature type="helix" evidence="33">
    <location>
        <begin position="330"/>
        <end position="347"/>
    </location>
</feature>
<feature type="strand" evidence="33">
    <location>
        <begin position="348"/>
        <end position="350"/>
    </location>
</feature>
<feature type="helix" evidence="33">
    <location>
        <begin position="353"/>
        <end position="356"/>
    </location>
</feature>
<feature type="turn" evidence="33">
    <location>
        <begin position="359"/>
        <end position="361"/>
    </location>
</feature>
<feature type="helix" evidence="33">
    <location>
        <begin position="364"/>
        <end position="376"/>
    </location>
</feature>
<feature type="turn" evidence="33">
    <location>
        <begin position="377"/>
        <end position="379"/>
    </location>
</feature>
<feature type="strand" evidence="34">
    <location>
        <begin position="390"/>
        <end position="393"/>
    </location>
</feature>
<feature type="turn" evidence="33">
    <location>
        <begin position="399"/>
        <end position="402"/>
    </location>
</feature>
<feature type="helix" evidence="33">
    <location>
        <begin position="403"/>
        <end position="419"/>
    </location>
</feature>
<dbReference type="EMBL" id="U54562">
    <property type="protein sequence ID" value="AAC51760.1"/>
    <property type="molecule type" value="mRNA"/>
</dbReference>
<dbReference type="EMBL" id="U94174">
    <property type="protein sequence ID" value="AAC51917.1"/>
    <property type="molecule type" value="Genomic_DNA"/>
</dbReference>
<dbReference type="EMBL" id="U94162">
    <property type="protein sequence ID" value="AAC51917.1"/>
    <property type="status" value="JOINED"/>
    <property type="molecule type" value="Genomic_DNA"/>
</dbReference>
<dbReference type="EMBL" id="U94163">
    <property type="protein sequence ID" value="AAC51917.1"/>
    <property type="status" value="JOINED"/>
    <property type="molecule type" value="Genomic_DNA"/>
</dbReference>
<dbReference type="EMBL" id="U94164">
    <property type="protein sequence ID" value="AAC51917.1"/>
    <property type="status" value="JOINED"/>
    <property type="molecule type" value="Genomic_DNA"/>
</dbReference>
<dbReference type="EMBL" id="U94165">
    <property type="protein sequence ID" value="AAC51917.1"/>
    <property type="status" value="JOINED"/>
    <property type="molecule type" value="Genomic_DNA"/>
</dbReference>
<dbReference type="EMBL" id="U94166">
    <property type="protein sequence ID" value="AAC51917.1"/>
    <property type="status" value="JOINED"/>
    <property type="molecule type" value="Genomic_DNA"/>
</dbReference>
<dbReference type="EMBL" id="U94167">
    <property type="protein sequence ID" value="AAC51917.1"/>
    <property type="status" value="JOINED"/>
    <property type="molecule type" value="Genomic_DNA"/>
</dbReference>
<dbReference type="EMBL" id="U94168">
    <property type="protein sequence ID" value="AAC51917.1"/>
    <property type="status" value="JOINED"/>
    <property type="molecule type" value="Genomic_DNA"/>
</dbReference>
<dbReference type="EMBL" id="U94169">
    <property type="protein sequence ID" value="AAC51917.1"/>
    <property type="status" value="JOINED"/>
    <property type="molecule type" value="Genomic_DNA"/>
</dbReference>
<dbReference type="EMBL" id="U94170">
    <property type="protein sequence ID" value="AAC51917.1"/>
    <property type="status" value="JOINED"/>
    <property type="molecule type" value="Genomic_DNA"/>
</dbReference>
<dbReference type="EMBL" id="U94171">
    <property type="protein sequence ID" value="AAC51917.1"/>
    <property type="status" value="JOINED"/>
    <property type="molecule type" value="Genomic_DNA"/>
</dbReference>
<dbReference type="EMBL" id="U94172">
    <property type="protein sequence ID" value="AAC51917.1"/>
    <property type="status" value="JOINED"/>
    <property type="molecule type" value="Genomic_DNA"/>
</dbReference>
<dbReference type="EMBL" id="U94173">
    <property type="protein sequence ID" value="AAC51917.1"/>
    <property type="status" value="JOINED"/>
    <property type="molecule type" value="Genomic_DNA"/>
</dbReference>
<dbReference type="EMBL" id="U94175">
    <property type="protein sequence ID" value="AAC51919.1"/>
    <property type="molecule type" value="mRNA"/>
</dbReference>
<dbReference type="EMBL" id="U62962">
    <property type="protein sequence ID" value="AAB58251.1"/>
    <property type="molecule type" value="mRNA"/>
</dbReference>
<dbReference type="EMBL" id="U85947">
    <property type="protein sequence ID" value="AAB88873.1"/>
    <property type="molecule type" value="mRNA"/>
</dbReference>
<dbReference type="EMBL" id="CR542275">
    <property type="protein sequence ID" value="CAG47071.1"/>
    <property type="molecule type" value="mRNA"/>
</dbReference>
<dbReference type="EMBL" id="CH471060">
    <property type="protein sequence ID" value="EAW91918.1"/>
    <property type="molecule type" value="Genomic_DNA"/>
</dbReference>
<dbReference type="EMBL" id="BC000734">
    <property type="protein sequence ID" value="AAH00734.1"/>
    <property type="molecule type" value="mRNA"/>
</dbReference>
<dbReference type="EMBL" id="BC008419">
    <property type="protein sequence ID" value="AAH08419.1"/>
    <property type="molecule type" value="mRNA"/>
</dbReference>
<dbReference type="EMBL" id="BC016706">
    <property type="protein sequence ID" value="AAH16706.1"/>
    <property type="molecule type" value="mRNA"/>
</dbReference>
<dbReference type="EMBL" id="BC017887">
    <property type="protein sequence ID" value="AAH17887.1"/>
    <property type="molecule type" value="mRNA"/>
</dbReference>
<dbReference type="EMBL" id="BC021679">
    <property type="protein sequence ID" value="AAH21679.1"/>
    <property type="molecule type" value="mRNA"/>
</dbReference>
<dbReference type="CCDS" id="CCDS6308.1"/>
<dbReference type="RefSeq" id="NP_001559.1">
    <property type="nucleotide sequence ID" value="NM_001568.3"/>
</dbReference>
<dbReference type="PDB" id="3J8B">
    <property type="method" value="EM"/>
    <property type="chains" value="E=1-395"/>
</dbReference>
<dbReference type="PDB" id="3J8C">
    <property type="method" value="EM"/>
    <property type="chains" value="E=1-395"/>
</dbReference>
<dbReference type="PDB" id="6FEC">
    <property type="method" value="EM"/>
    <property type="resolution" value="6.30 A"/>
    <property type="chains" value="3=1-445"/>
</dbReference>
<dbReference type="PDB" id="6YBD">
    <property type="method" value="EM"/>
    <property type="resolution" value="3.30 A"/>
    <property type="chains" value="v=1-445"/>
</dbReference>
<dbReference type="PDB" id="6ZMW">
    <property type="method" value="EM"/>
    <property type="resolution" value="3.70 A"/>
    <property type="chains" value="v=1-445"/>
</dbReference>
<dbReference type="PDB" id="6ZON">
    <property type="method" value="EM"/>
    <property type="resolution" value="3.00 A"/>
    <property type="chains" value="E=1-445"/>
</dbReference>
<dbReference type="PDB" id="6ZP4">
    <property type="method" value="EM"/>
    <property type="resolution" value="2.90 A"/>
    <property type="chains" value="E=1-445"/>
</dbReference>
<dbReference type="PDB" id="6ZVJ">
    <property type="method" value="EM"/>
    <property type="resolution" value="3.80 A"/>
    <property type="chains" value="E=2-430"/>
</dbReference>
<dbReference type="PDB" id="7A09">
    <property type="method" value="EM"/>
    <property type="resolution" value="3.50 A"/>
    <property type="chains" value="E=1-445"/>
</dbReference>
<dbReference type="PDB" id="7QP6">
    <property type="method" value="EM"/>
    <property type="resolution" value="4.70 A"/>
    <property type="chains" value="v=1-445"/>
</dbReference>
<dbReference type="PDB" id="7QP7">
    <property type="method" value="EM"/>
    <property type="resolution" value="3.70 A"/>
    <property type="chains" value="v=1-445"/>
</dbReference>
<dbReference type="PDB" id="8OZ0">
    <property type="method" value="EM"/>
    <property type="resolution" value="3.50 A"/>
    <property type="chains" value="5=1-445"/>
</dbReference>
<dbReference type="PDB" id="8PJ1">
    <property type="method" value="EM"/>
    <property type="resolution" value="3.40 A"/>
    <property type="chains" value="v=1-445"/>
</dbReference>
<dbReference type="PDB" id="8PJ2">
    <property type="method" value="EM"/>
    <property type="resolution" value="3.40 A"/>
    <property type="chains" value="v=1-445"/>
</dbReference>
<dbReference type="PDB" id="8PJ3">
    <property type="method" value="EM"/>
    <property type="resolution" value="3.70 A"/>
    <property type="chains" value="v=1-445"/>
</dbReference>
<dbReference type="PDB" id="8PJ4">
    <property type="method" value="EM"/>
    <property type="resolution" value="3.20 A"/>
    <property type="chains" value="v=1-445"/>
</dbReference>
<dbReference type="PDB" id="8PJ5">
    <property type="method" value="EM"/>
    <property type="resolution" value="2.90 A"/>
    <property type="chains" value="v=1-445"/>
</dbReference>
<dbReference type="PDB" id="8PJ6">
    <property type="method" value="EM"/>
    <property type="resolution" value="2.90 A"/>
    <property type="chains" value="v=1-445"/>
</dbReference>
<dbReference type="PDB" id="8PPL">
    <property type="method" value="EM"/>
    <property type="resolution" value="2.65 A"/>
    <property type="chains" value="Iv=1-445"/>
</dbReference>
<dbReference type="PDB" id="8RG0">
    <property type="method" value="EM"/>
    <property type="resolution" value="3.40 A"/>
    <property type="chains" value="v=1-445"/>
</dbReference>
<dbReference type="PDB" id="8XXN">
    <property type="method" value="EM"/>
    <property type="resolution" value="3.60 A"/>
    <property type="chains" value="3E=1-445"/>
</dbReference>
<dbReference type="PDB" id="9BLN">
    <property type="method" value="EM"/>
    <property type="resolution" value="3.90 A"/>
    <property type="chains" value="v=1-445"/>
</dbReference>
<dbReference type="PDBsum" id="3J8B"/>
<dbReference type="PDBsum" id="3J8C"/>
<dbReference type="PDBsum" id="6FEC"/>
<dbReference type="PDBsum" id="6YBD"/>
<dbReference type="PDBsum" id="6ZMW"/>
<dbReference type="PDBsum" id="6ZON"/>
<dbReference type="PDBsum" id="6ZP4"/>
<dbReference type="PDBsum" id="6ZVJ"/>
<dbReference type="PDBsum" id="7A09"/>
<dbReference type="PDBsum" id="7QP6"/>
<dbReference type="PDBsum" id="7QP7"/>
<dbReference type="PDBsum" id="8OZ0"/>
<dbReference type="PDBsum" id="8PJ1"/>
<dbReference type="PDBsum" id="8PJ2"/>
<dbReference type="PDBsum" id="8PJ3"/>
<dbReference type="PDBsum" id="8PJ4"/>
<dbReference type="PDBsum" id="8PJ5"/>
<dbReference type="PDBsum" id="8PJ6"/>
<dbReference type="PDBsum" id="8PPL"/>
<dbReference type="PDBsum" id="8RG0"/>
<dbReference type="PDBsum" id="8XXN"/>
<dbReference type="PDBsum" id="9BLN"/>
<dbReference type="EMDB" id="EMD-10769"/>
<dbReference type="EMDB" id="EMD-11302"/>
<dbReference type="EMDB" id="EMD-11325"/>
<dbReference type="EMDB" id="EMD-11335"/>
<dbReference type="EMDB" id="EMD-11458"/>
<dbReference type="EMDB" id="EMD-11602"/>
<dbReference type="EMDB" id="EMD-14113"/>
<dbReference type="EMDB" id="EMD-14114"/>
<dbReference type="EMDB" id="EMD-17297"/>
<dbReference type="EMDB" id="EMD-17696"/>
<dbReference type="EMDB" id="EMD-17697"/>
<dbReference type="EMDB" id="EMD-17698"/>
<dbReference type="EMDB" id="EMD-17699"/>
<dbReference type="EMDB" id="EMD-17700"/>
<dbReference type="EMDB" id="EMD-17701"/>
<dbReference type="EMDB" id="EMD-17805"/>
<dbReference type="EMDB" id="EMD-19128"/>
<dbReference type="EMDB" id="EMD-38754"/>
<dbReference type="EMDB" id="EMD-4242"/>
<dbReference type="EMDB" id="EMD-44671"/>
<dbReference type="SMR" id="P60228"/>
<dbReference type="BioGRID" id="109857">
    <property type="interactions" value="278"/>
</dbReference>
<dbReference type="ComplexPortal" id="CPX-6036">
    <property type="entry name" value="Eukaryotic translation initiation factor 3 complex"/>
</dbReference>
<dbReference type="CORUM" id="P60228"/>
<dbReference type="DIP" id="DIP-32691N"/>
<dbReference type="FunCoup" id="P60228">
    <property type="interactions" value="3597"/>
</dbReference>
<dbReference type="IntAct" id="P60228">
    <property type="interactions" value="142"/>
</dbReference>
<dbReference type="MINT" id="P60228"/>
<dbReference type="STRING" id="9606.ENSP00000220849"/>
<dbReference type="GlyGen" id="P60228">
    <property type="glycosylation" value="1 site, 1 O-linked glycan (1 site)"/>
</dbReference>
<dbReference type="iPTMnet" id="P60228"/>
<dbReference type="MetOSite" id="P60228"/>
<dbReference type="PhosphoSitePlus" id="P60228"/>
<dbReference type="SwissPalm" id="P60228"/>
<dbReference type="BioMuta" id="EIF3E"/>
<dbReference type="DMDM" id="41019126"/>
<dbReference type="jPOST" id="P60228"/>
<dbReference type="MassIVE" id="P60228"/>
<dbReference type="PaxDb" id="9606-ENSP00000220849"/>
<dbReference type="PeptideAtlas" id="P60228"/>
<dbReference type="ProteomicsDB" id="57190"/>
<dbReference type="Pumba" id="P60228"/>
<dbReference type="Antibodypedia" id="13407">
    <property type="antibodies" value="305 antibodies from 33 providers"/>
</dbReference>
<dbReference type="DNASU" id="3646"/>
<dbReference type="Ensembl" id="ENST00000220849.10">
    <property type="protein sequence ID" value="ENSP00000220849.5"/>
    <property type="gene ID" value="ENSG00000104408.11"/>
</dbReference>
<dbReference type="GeneID" id="3646"/>
<dbReference type="KEGG" id="hsa:3646"/>
<dbReference type="MANE-Select" id="ENST00000220849.10">
    <property type="protein sequence ID" value="ENSP00000220849.5"/>
    <property type="RefSeq nucleotide sequence ID" value="NM_001568.3"/>
    <property type="RefSeq protein sequence ID" value="NP_001559.1"/>
</dbReference>
<dbReference type="UCSC" id="uc003ymu.4">
    <property type="organism name" value="human"/>
</dbReference>
<dbReference type="AGR" id="HGNC:3277"/>
<dbReference type="CTD" id="3646"/>
<dbReference type="DisGeNET" id="3646"/>
<dbReference type="GeneCards" id="EIF3E"/>
<dbReference type="HGNC" id="HGNC:3277">
    <property type="gene designation" value="EIF3E"/>
</dbReference>
<dbReference type="HPA" id="ENSG00000104408">
    <property type="expression patterns" value="Low tissue specificity"/>
</dbReference>
<dbReference type="MalaCards" id="EIF3E"/>
<dbReference type="MIM" id="602210">
    <property type="type" value="gene"/>
</dbReference>
<dbReference type="neXtProt" id="NX_P60228"/>
<dbReference type="OpenTargets" id="ENSG00000104408"/>
<dbReference type="PharmGKB" id="PA27705"/>
<dbReference type="VEuPathDB" id="HostDB:ENSG00000104408"/>
<dbReference type="eggNOG" id="KOG2758">
    <property type="taxonomic scope" value="Eukaryota"/>
</dbReference>
<dbReference type="GeneTree" id="ENSGT00390000002661"/>
<dbReference type="InParanoid" id="P60228"/>
<dbReference type="OMA" id="NCPWILR"/>
<dbReference type="OrthoDB" id="417252at2759"/>
<dbReference type="PAN-GO" id="P60228">
    <property type="GO annotations" value="3 GO annotations based on evolutionary models"/>
</dbReference>
<dbReference type="PhylomeDB" id="P60228"/>
<dbReference type="TreeFam" id="TF101518"/>
<dbReference type="PathwayCommons" id="P60228"/>
<dbReference type="Reactome" id="R-HSA-156827">
    <property type="pathway name" value="L13a-mediated translational silencing of Ceruloplasmin expression"/>
</dbReference>
<dbReference type="Reactome" id="R-HSA-72649">
    <property type="pathway name" value="Translation initiation complex formation"/>
</dbReference>
<dbReference type="Reactome" id="R-HSA-72689">
    <property type="pathway name" value="Formation of a pool of free 40S subunits"/>
</dbReference>
<dbReference type="Reactome" id="R-HSA-72695">
    <property type="pathway name" value="Formation of the ternary complex, and subsequently, the 43S complex"/>
</dbReference>
<dbReference type="Reactome" id="R-HSA-72702">
    <property type="pathway name" value="Ribosomal scanning and start codon recognition"/>
</dbReference>
<dbReference type="Reactome" id="R-HSA-72706">
    <property type="pathway name" value="GTP hydrolysis and joining of the 60S ribosomal subunit"/>
</dbReference>
<dbReference type="SignaLink" id="P60228"/>
<dbReference type="SIGNOR" id="P60228"/>
<dbReference type="BioGRID-ORCS" id="3646">
    <property type="hits" value="690 hits in 1167 CRISPR screens"/>
</dbReference>
<dbReference type="CD-CODE" id="91857CE7">
    <property type="entry name" value="Nucleolus"/>
</dbReference>
<dbReference type="CD-CODE" id="DEE660B4">
    <property type="entry name" value="Stress granule"/>
</dbReference>
<dbReference type="ChiTaRS" id="EIF3E">
    <property type="organism name" value="human"/>
</dbReference>
<dbReference type="EvolutionaryTrace" id="P60228"/>
<dbReference type="GeneWiki" id="EIF3S6"/>
<dbReference type="GenomeRNAi" id="3646"/>
<dbReference type="Pharos" id="P60228">
    <property type="development level" value="Tbio"/>
</dbReference>
<dbReference type="PRO" id="PR:P60228"/>
<dbReference type="Proteomes" id="UP000005640">
    <property type="component" value="Chromosome 8"/>
</dbReference>
<dbReference type="RNAct" id="P60228">
    <property type="molecule type" value="protein"/>
</dbReference>
<dbReference type="Bgee" id="ENSG00000104408">
    <property type="expression patterns" value="Expressed in calcaneal tendon and 211 other cell types or tissues"/>
</dbReference>
<dbReference type="ExpressionAtlas" id="P60228">
    <property type="expression patterns" value="baseline and differential"/>
</dbReference>
<dbReference type="GO" id="GO:0000785">
    <property type="term" value="C:chromatin"/>
    <property type="evidence" value="ECO:0000303"/>
    <property type="project" value="UniProtKB"/>
</dbReference>
<dbReference type="GO" id="GO:0005737">
    <property type="term" value="C:cytoplasm"/>
    <property type="evidence" value="ECO:0000314"/>
    <property type="project" value="UniProtKB"/>
</dbReference>
<dbReference type="GO" id="GO:0005829">
    <property type="term" value="C:cytosol"/>
    <property type="evidence" value="ECO:0000314"/>
    <property type="project" value="HPA"/>
</dbReference>
<dbReference type="GO" id="GO:0016282">
    <property type="term" value="C:eukaryotic 43S preinitiation complex"/>
    <property type="evidence" value="ECO:0007669"/>
    <property type="project" value="UniProtKB-UniRule"/>
</dbReference>
<dbReference type="GO" id="GO:0033290">
    <property type="term" value="C:eukaryotic 48S preinitiation complex"/>
    <property type="evidence" value="ECO:0007669"/>
    <property type="project" value="UniProtKB-UniRule"/>
</dbReference>
<dbReference type="GO" id="GO:0005852">
    <property type="term" value="C:eukaryotic translation initiation factor 3 complex"/>
    <property type="evidence" value="ECO:0000314"/>
    <property type="project" value="UniProtKB"/>
</dbReference>
<dbReference type="GO" id="GO:0071540">
    <property type="term" value="C:eukaryotic translation initiation factor 3 complex, eIF3e"/>
    <property type="evidence" value="ECO:0007669"/>
    <property type="project" value="UniProtKB-UniRule"/>
</dbReference>
<dbReference type="GO" id="GO:0070062">
    <property type="term" value="C:extracellular exosome"/>
    <property type="evidence" value="ECO:0007005"/>
    <property type="project" value="UniProtKB"/>
</dbReference>
<dbReference type="GO" id="GO:0016020">
    <property type="term" value="C:membrane"/>
    <property type="evidence" value="ECO:0007005"/>
    <property type="project" value="UniProtKB"/>
</dbReference>
<dbReference type="GO" id="GO:0005654">
    <property type="term" value="C:nucleoplasm"/>
    <property type="evidence" value="ECO:0000303"/>
    <property type="project" value="UniProtKB"/>
</dbReference>
<dbReference type="GO" id="GO:0005634">
    <property type="term" value="C:nucleus"/>
    <property type="evidence" value="ECO:0000314"/>
    <property type="project" value="UniProtKB"/>
</dbReference>
<dbReference type="GO" id="GO:0016605">
    <property type="term" value="C:PML body"/>
    <property type="evidence" value="ECO:0007669"/>
    <property type="project" value="UniProtKB-SubCell"/>
</dbReference>
<dbReference type="GO" id="GO:0014069">
    <property type="term" value="C:postsynaptic density"/>
    <property type="evidence" value="ECO:0007669"/>
    <property type="project" value="Ensembl"/>
</dbReference>
<dbReference type="GO" id="GO:0045296">
    <property type="term" value="F:cadherin binding"/>
    <property type="evidence" value="ECO:0007005"/>
    <property type="project" value="BHF-UCL"/>
</dbReference>
<dbReference type="GO" id="GO:0003723">
    <property type="term" value="F:RNA binding"/>
    <property type="evidence" value="ECO:0007005"/>
    <property type="project" value="UniProtKB"/>
</dbReference>
<dbReference type="GO" id="GO:0003743">
    <property type="term" value="F:translation initiation factor activity"/>
    <property type="evidence" value="ECO:0000305"/>
    <property type="project" value="UniProtKB"/>
</dbReference>
<dbReference type="GO" id="GO:0001732">
    <property type="term" value="P:formation of cytoplasmic translation initiation complex"/>
    <property type="evidence" value="ECO:0000303"/>
    <property type="project" value="ComplexPortal"/>
</dbReference>
<dbReference type="GO" id="GO:0045947">
    <property type="term" value="P:negative regulation of translational initiation"/>
    <property type="evidence" value="ECO:0000303"/>
    <property type="project" value="UniProtKB"/>
</dbReference>
<dbReference type="GO" id="GO:0000184">
    <property type="term" value="P:nuclear-transcribed mRNA catabolic process, nonsense-mediated decay"/>
    <property type="evidence" value="ECO:0000315"/>
    <property type="project" value="UniProtKB"/>
</dbReference>
<dbReference type="GO" id="GO:1902416">
    <property type="term" value="P:positive regulation of mRNA binding"/>
    <property type="evidence" value="ECO:0000353"/>
    <property type="project" value="ParkinsonsUK-UCL"/>
</dbReference>
<dbReference type="GO" id="GO:0045727">
    <property type="term" value="P:positive regulation of translation"/>
    <property type="evidence" value="ECO:0000353"/>
    <property type="project" value="ParkinsonsUK-UCL"/>
</dbReference>
<dbReference type="GO" id="GO:0006446">
    <property type="term" value="P:regulation of translational initiation"/>
    <property type="evidence" value="ECO:0000250"/>
    <property type="project" value="UniProtKB"/>
</dbReference>
<dbReference type="GO" id="GO:0006413">
    <property type="term" value="P:translational initiation"/>
    <property type="evidence" value="ECO:0000314"/>
    <property type="project" value="UniProtKB"/>
</dbReference>
<dbReference type="CDD" id="cd21378">
    <property type="entry name" value="eIF3E"/>
    <property type="match status" value="1"/>
</dbReference>
<dbReference type="HAMAP" id="MF_03004">
    <property type="entry name" value="eIF3e"/>
    <property type="match status" value="1"/>
</dbReference>
<dbReference type="InterPro" id="IPR016650">
    <property type="entry name" value="eIF3e"/>
</dbReference>
<dbReference type="InterPro" id="IPR019010">
    <property type="entry name" value="eIF3e_N"/>
</dbReference>
<dbReference type="InterPro" id="IPR000717">
    <property type="entry name" value="PCI_dom"/>
</dbReference>
<dbReference type="InterPro" id="IPR036390">
    <property type="entry name" value="WH_DNA-bd_sf"/>
</dbReference>
<dbReference type="PANTHER" id="PTHR10317">
    <property type="entry name" value="EUKARYOTIC TRANSLATION INITIATION FACTOR 3 SUBUNIT E"/>
    <property type="match status" value="1"/>
</dbReference>
<dbReference type="Pfam" id="PF09440">
    <property type="entry name" value="eIF3_N"/>
    <property type="match status" value="1"/>
</dbReference>
<dbReference type="Pfam" id="PF21357">
    <property type="entry name" value="EIF3E_C"/>
    <property type="match status" value="1"/>
</dbReference>
<dbReference type="Pfam" id="PF01399">
    <property type="entry name" value="PCI"/>
    <property type="match status" value="1"/>
</dbReference>
<dbReference type="PIRSF" id="PIRSF016255">
    <property type="entry name" value="eIF3e_su6"/>
    <property type="match status" value="1"/>
</dbReference>
<dbReference type="SMART" id="SM01186">
    <property type="entry name" value="eIF3_N"/>
    <property type="match status" value="1"/>
</dbReference>
<dbReference type="SMART" id="SM00088">
    <property type="entry name" value="PINT"/>
    <property type="match status" value="1"/>
</dbReference>
<dbReference type="SUPFAM" id="SSF46785">
    <property type="entry name" value="Winged helix' DNA-binding domain"/>
    <property type="match status" value="1"/>
</dbReference>
<dbReference type="PROSITE" id="PS50250">
    <property type="entry name" value="PCI"/>
    <property type="match status" value="1"/>
</dbReference>
<reference key="1">
    <citation type="journal article" date="1997" name="J. Biol. Chem.">
        <title>The translation initiation factor eIF3-p48 subunit is encoded by int-6, a site of frequent integration by the mouse mammary tumor virus genome.</title>
        <authorList>
            <person name="Asano K."/>
            <person name="Merrick W.C."/>
            <person name="Hershey J.W.B."/>
        </authorList>
    </citation>
    <scope>NUCLEOTIDE SEQUENCE [MRNA]</scope>
    <scope>PROTEIN SEQUENCE OF 280-289 AND 427-436</scope>
    <scope>INTERACTION WITH EIF3A</scope>
    <scope>IDENTIFICATION IN THE EIF-3 COMPLEX</scope>
    <scope>TISSUE SPECIFICITY</scope>
    <source>
        <tissue>Liver</tissue>
    </source>
</reference>
<reference key="2">
    <citation type="journal article" date="1997" name="Genomics">
        <title>The chromosome location of the human homolog of the mouse mammary tumor-associated gene INT6 and its status in human breast carcinomas.</title>
        <authorList>
            <person name="Miyazaki S."/>
            <person name="Imatani A."/>
            <person name="Ballard L."/>
            <person name="Marchetti A."/>
            <person name="Buttitta F."/>
            <person name="Albertsen H."/>
            <person name="Nevanlinna H.A."/>
            <person name="Gallahan D."/>
            <person name="Callahan R."/>
        </authorList>
    </citation>
    <scope>NUCLEOTIDE SEQUENCE [GENOMIC DNA / MRNA]</scope>
    <source>
        <tissue>Lung</tissue>
    </source>
</reference>
<reference key="3">
    <citation type="journal article" date="1996" name="Science">
        <title>Exclusion of Int-6 from PML nuclear bodies by binding to the HTLV-I Tax oncoprotein.</title>
        <authorList>
            <person name="Desbois C."/>
            <person name="Rousset R."/>
            <person name="Bantignies F."/>
            <person name="Jalinot P."/>
        </authorList>
    </citation>
    <scope>NUCLEOTIDE SEQUENCE [MRNA]</scope>
    <scope>INTERACTION WITH TAX-1</scope>
    <scope>SUBCELLULAR LOCATION</scope>
    <scope>TISSUE SPECIFICITY</scope>
</reference>
<reference key="4">
    <citation type="journal article" date="1997" name="J. Biomed. Sci.">
        <title>Divergent subcellular locations of HTLV-I Tax and Int-6: a contrast between in vitro protein-protein binding and intracellular protein colocalization.</title>
        <authorList>
            <person name="Neuvert C."/>
            <person name="Jin D.-Y."/>
            <person name="Semmes O.J."/>
            <person name="Diella F."/>
            <person name="Callahan R."/>
            <person name="Jeang K.-T."/>
        </authorList>
    </citation>
    <scope>NUCLEOTIDE SEQUENCE [MRNA]</scope>
    <scope>INTERACTION WITH TAX-1</scope>
    <scope>SUBCELLULAR LOCATION</scope>
</reference>
<reference key="5">
    <citation type="submission" date="2004-06" db="EMBL/GenBank/DDBJ databases">
        <title>Cloning of human full open reading frames in Gateway(TM) system entry vector (pDONR201).</title>
        <authorList>
            <person name="Ebert L."/>
            <person name="Schick M."/>
            <person name="Neubert P."/>
            <person name="Schatten R."/>
            <person name="Henze S."/>
            <person name="Korn B."/>
        </authorList>
    </citation>
    <scope>NUCLEOTIDE SEQUENCE [LARGE SCALE MRNA]</scope>
</reference>
<reference key="6">
    <citation type="submission" date="2005-07" db="EMBL/GenBank/DDBJ databases">
        <authorList>
            <person name="Mural R.J."/>
            <person name="Istrail S."/>
            <person name="Sutton G.G."/>
            <person name="Florea L."/>
            <person name="Halpern A.L."/>
            <person name="Mobarry C.M."/>
            <person name="Lippert R."/>
            <person name="Walenz B."/>
            <person name="Shatkay H."/>
            <person name="Dew I."/>
            <person name="Miller J.R."/>
            <person name="Flanigan M.J."/>
            <person name="Edwards N.J."/>
            <person name="Bolanos R."/>
            <person name="Fasulo D."/>
            <person name="Halldorsson B.V."/>
            <person name="Hannenhalli S."/>
            <person name="Turner R."/>
            <person name="Yooseph S."/>
            <person name="Lu F."/>
            <person name="Nusskern D.R."/>
            <person name="Shue B.C."/>
            <person name="Zheng X.H."/>
            <person name="Zhong F."/>
            <person name="Delcher A.L."/>
            <person name="Huson D.H."/>
            <person name="Kravitz S.A."/>
            <person name="Mouchard L."/>
            <person name="Reinert K."/>
            <person name="Remington K.A."/>
            <person name="Clark A.G."/>
            <person name="Waterman M.S."/>
            <person name="Eichler E.E."/>
            <person name="Adams M.D."/>
            <person name="Hunkapiller M.W."/>
            <person name="Myers E.W."/>
            <person name="Venter J.C."/>
        </authorList>
    </citation>
    <scope>NUCLEOTIDE SEQUENCE [LARGE SCALE GENOMIC DNA]</scope>
</reference>
<reference key="7">
    <citation type="journal article" date="2004" name="Genome Res.">
        <title>The status, quality, and expansion of the NIH full-length cDNA project: the Mammalian Gene Collection (MGC).</title>
        <authorList>
            <consortium name="The MGC Project Team"/>
        </authorList>
    </citation>
    <scope>NUCLEOTIDE SEQUENCE [LARGE SCALE MRNA]</scope>
    <scope>VARIANT VAL-185</scope>
    <source>
        <tissue>Bone marrow</tissue>
        <tissue>Brain</tissue>
        <tissue>Lung</tissue>
        <tissue>Muscle</tissue>
    </source>
</reference>
<reference key="8">
    <citation type="submission" date="2008-03" db="UniProtKB">
        <authorList>
            <person name="Bienvenut W.V."/>
            <person name="Heiserich L."/>
            <person name="Gottlieb E."/>
            <person name="Matallanas D."/>
            <person name="Cooper W.N."/>
            <person name="Kolch W."/>
        </authorList>
    </citation>
    <scope>PROTEIN SEQUENCE OF 2-9; 60-71; 164-172; 256-265 AND 370-376</scope>
    <scope>CLEAVAGE OF INITIATOR METHIONINE</scope>
    <scope>ACETYLATION AT ALA-2</scope>
    <scope>IDENTIFICATION BY MASS SPECTROMETRY</scope>
    <source>
        <tissue>Colon carcinoma</tissue>
        <tissue>Mammary carcinoma</tissue>
    </source>
</reference>
<reference key="9">
    <citation type="journal article" date="1999" name="J. Cell Sci.">
        <title>Interaction between the Ret finger protein and the Int-6 gene product and co-localisation into nuclear bodies.</title>
        <authorList>
            <person name="Morris-Desbois C."/>
            <person name="Bochard V."/>
            <person name="Reynaud C."/>
            <person name="Jalinot P."/>
        </authorList>
    </citation>
    <scope>INTERACTION WITH EIF3C AND TRIM27</scope>
    <scope>SUBCELLULAR LOCATION</scope>
</reference>
<reference key="10">
    <citation type="journal article" date="2001" name="J. Biol. Chem.">
        <title>Saccharomyces cerevisiae protein Pci8p and human protein eIF3e/Int-6 interact with the eIF3 core complex by binding to cognate eIF3b subunits.</title>
        <authorList>
            <person name="Shalev A."/>
            <person name="Valasek L."/>
            <person name="Pise-Masison C.A."/>
            <person name="Radonovich M."/>
            <person name="Phan L."/>
            <person name="Clayton J."/>
            <person name="He H."/>
            <person name="Brady J.N."/>
            <person name="Hinnebusch A.G."/>
            <person name="Asano K."/>
        </authorList>
    </citation>
    <scope>INTERACTION WITH EIF3B</scope>
</reference>
<reference key="11">
    <citation type="journal article" date="2001" name="J. Biol. Chem.">
        <title>The human protein HSPC021 interacts with Int-6 and is associated with eukaryotic translation initiation factor 3.</title>
        <authorList>
            <person name="Morris-Desbois C."/>
            <person name="Rety S."/>
            <person name="Ferro M."/>
            <person name="Garin J."/>
            <person name="Jalinot P."/>
        </authorList>
    </citation>
    <scope>INTERACTION WITH EIF3L</scope>
</reference>
<reference key="12">
    <citation type="journal article" date="2002" name="FEBS Lett.">
        <title>Association of the mammalian proto-oncoprotein Int-6 with the three protein complexes eIF3, COP9 signalosome and 26S proteasome.</title>
        <authorList>
            <person name="Hoareau Alves K."/>
            <person name="Bochard V."/>
            <person name="Rety S."/>
            <person name="Jalinot P."/>
        </authorList>
    </citation>
    <scope>INTERACTION WITH COPS3; COPS6; COPS7 AND PSMC6</scope>
</reference>
<reference key="13">
    <citation type="journal article" date="2003" name="Nature">
        <title>Proteomic characterization of the human centrosome by protein correlation profiling.</title>
        <authorList>
            <person name="Andersen J.S."/>
            <person name="Wilkinson C.J."/>
            <person name="Mayor T."/>
            <person name="Mortensen P."/>
            <person name="Nigg E.A."/>
            <person name="Mann M."/>
        </authorList>
    </citation>
    <scope>IDENTIFICATION BY MASS SPECTROMETRY</scope>
    <source>
        <tissue>Lymphoblast</tissue>
    </source>
</reference>
<reference key="14">
    <citation type="journal article" date="2005" name="RNA">
        <title>Binding of eukaryotic initiation factor 3 to ribosomal 40S subunits and its role in ribosomal dissociation and anti-association.</title>
        <authorList>
            <person name="Kolupaeva V.G."/>
            <person name="Unbehaun A."/>
            <person name="Lomakin I.B."/>
            <person name="Hellen C.U.T."/>
            <person name="Pestova T.V."/>
        </authorList>
    </citation>
    <scope>CHARACTERIZATION OF THE EIF-3 COMPLEX</scope>
</reference>
<reference key="15">
    <citation type="journal article" date="2005" name="Virology">
        <title>Induction and mode of action of the viral stress-inducible murine proteins, P56 and P54.</title>
        <authorList>
            <person name="Terenzi F."/>
            <person name="Pal S."/>
            <person name="Sen G.C."/>
        </authorList>
    </citation>
    <scope>INTERACTION WITH IFIT1</scope>
</reference>
<reference key="16">
    <citation type="journal article" date="2006" name="J. Biol. Chem.">
        <title>Translation initiation factor eIF4G-1 binds to eIF3 through the eIF3e subunit.</title>
        <authorList>
            <person name="LeFebvre A.K."/>
            <person name="Korneeva N.L."/>
            <person name="Trutschl M."/>
            <person name="Cvek U."/>
            <person name="Duzan R.D."/>
            <person name="Bradley C.A."/>
            <person name="Hershey J.W.B."/>
            <person name="Rhoads R.E."/>
        </authorList>
    </citation>
    <scope>INTERACTION WITH EIF4G1</scope>
    <scope>IDENTIFICATION IN THE EIF-3 COMPLEX</scope>
    <scope>IDENTIFICATION BY MASS SPECTROMETRY</scope>
</reference>
<reference key="17">
    <citation type="journal article" date="2006" name="J. Biol. Chem.">
        <title>Distinct induction patterns and functions of two closely related interferon-inducible human genes, ISG54 and ISG56.</title>
        <authorList>
            <person name="Terenzi F."/>
            <person name="Hui D.J."/>
            <person name="Merrick W.C."/>
            <person name="Sen G.C."/>
        </authorList>
    </citation>
    <scope>INTERACTION WITH IFIT2</scope>
</reference>
<reference key="18">
    <citation type="journal article" date="2007" name="EMBO J.">
        <title>Reconstitution reveals the functional core of mammalian eIF3.</title>
        <authorList>
            <person name="Masutani M."/>
            <person name="Sonenberg N."/>
            <person name="Yokoyama S."/>
            <person name="Imataka H."/>
        </authorList>
    </citation>
    <scope>FUNCTION</scope>
    <scope>CHARACTERIZATION OF THE EIF-3 COMPLEX</scope>
</reference>
<reference key="19">
    <citation type="journal article" date="2007" name="EMBO Rep.">
        <title>Human INT6/eIF3e is required for nonsense-mediated mRNA decay.</title>
        <authorList>
            <person name="Morris C."/>
            <person name="Wittmann J."/>
            <person name="Jaeck H.-M."/>
            <person name="Jalinot P."/>
        </authorList>
    </citation>
    <scope>FUNCTION</scope>
    <scope>INTERACTION WITH EIF3A; EIF3B; EIF3C; EIF4G1; NCBP1 AND UPF2</scope>
</reference>
<reference key="20">
    <citation type="journal article" date="2007" name="J. Biol. Chem.">
        <title>Mammalian tumor suppressor Int6 specifically targets hypoxia inducible factor 2 alpha for degradation by hypoxia- and pVHL-independent regulation.</title>
        <authorList>
            <person name="Chen L."/>
            <person name="Uchida K."/>
            <person name="Endler A."/>
            <person name="Shibasaki F."/>
        </authorList>
    </citation>
    <scope>FUNCTION</scope>
    <scope>INTERACTION WITH EPAS1</scope>
</reference>
<reference key="21">
    <citation type="journal article" date="2007" name="J. Biol. Chem.">
        <title>Isolation of the Schizosaccharomyces pombe proteasome subunit Rpn7 and a structure-function study of the proteasome-COP9-initiation factor domain.</title>
        <authorList>
            <person name="Sha Z."/>
            <person name="Yen H.-C.S."/>
            <person name="Scheel H."/>
            <person name="Suo J."/>
            <person name="Hofmann K."/>
            <person name="Chang E.C."/>
        </authorList>
    </citation>
    <scope>SUBCELLULAR LOCATION</scope>
    <scope>MUTAGENESIS OF LEU-312</scope>
</reference>
<reference key="22">
    <citation type="journal article" date="2007" name="Mol. Cell. Proteomics">
        <title>Structural characterization of the human eukaryotic initiation factor 3 protein complex by mass spectrometry.</title>
        <authorList>
            <person name="Damoc E."/>
            <person name="Fraser C.S."/>
            <person name="Zhou M."/>
            <person name="Videler H."/>
            <person name="Mayeur G.L."/>
            <person name="Hershey J.W.B."/>
            <person name="Doudna J.A."/>
            <person name="Robinson C.V."/>
            <person name="Leary J.A."/>
        </authorList>
    </citation>
    <scope>IDENTIFICATION IN THE EIF-3 COMPLEX</scope>
    <scope>CHARACTERIZATION OF THE EIF-3 COMPLEX</scope>
    <scope>CLEAVAGE OF INITIATOR METHIONINE</scope>
    <scope>ACETYLATION AT ALA-2</scope>
    <scope>MASS SPECTROMETRY</scope>
</reference>
<reference key="23">
    <citation type="journal article" date="2007" name="Oncogene">
        <title>Human INT6 interacts with MCM7 and regulates its stability during S phase of the cell cycle.</title>
        <authorList>
            <person name="Buchsbaum S."/>
            <person name="Morris C."/>
            <person name="Bochard V."/>
            <person name="Jalinot P."/>
        </authorList>
    </citation>
    <scope>FUNCTION</scope>
    <scope>INTERACTION WITH MCM7</scope>
</reference>
<reference key="24">
    <citation type="journal article" date="2008" name="Mol. Cell">
        <title>Kinase-selective enrichment enables quantitative phosphoproteomics of the kinome across the cell cycle.</title>
        <authorList>
            <person name="Daub H."/>
            <person name="Olsen J.V."/>
            <person name="Bairlein M."/>
            <person name="Gnad F."/>
            <person name="Oppermann F.S."/>
            <person name="Korner R."/>
            <person name="Greff Z."/>
            <person name="Keri G."/>
            <person name="Stemmann O."/>
            <person name="Mann M."/>
        </authorList>
    </citation>
    <scope>IDENTIFICATION BY MASS SPECTROMETRY [LARGE SCALE ANALYSIS]</scope>
    <source>
        <tissue>Cervix carcinoma</tissue>
    </source>
</reference>
<reference key="25">
    <citation type="journal article" date="2008" name="Proc. Natl. Acad. Sci. U.S.A.">
        <title>A quantitative atlas of mitotic phosphorylation.</title>
        <authorList>
            <person name="Dephoure N."/>
            <person name="Zhou C."/>
            <person name="Villen J."/>
            <person name="Beausoleil S.A."/>
            <person name="Bakalarski C.E."/>
            <person name="Elledge S.J."/>
            <person name="Gygi S.P."/>
        </authorList>
    </citation>
    <scope>PHOSPHORYLATION [LARGE SCALE ANALYSIS] AT SER-399</scope>
    <scope>IDENTIFICATION BY MASS SPECTROMETRY [LARGE SCALE ANALYSIS]</scope>
    <source>
        <tissue>Cervix carcinoma</tissue>
    </source>
</reference>
<reference key="26">
    <citation type="journal article" date="2008" name="Proc. Natl. Acad. Sci. U.S.A.">
        <title>Mass spectrometry reveals modularity and a complete subunit interaction map of the eukaryotic translation factor eIF3.</title>
        <authorList>
            <person name="Zhou M."/>
            <person name="Sandercock A.M."/>
            <person name="Fraser C.S."/>
            <person name="Ridlova G."/>
            <person name="Stephens E."/>
            <person name="Schenauer M.R."/>
            <person name="Yokoi-Fong T."/>
            <person name="Barsky D."/>
            <person name="Leary J.A."/>
            <person name="Hershey J.W.B."/>
            <person name="Doudna J.A."/>
            <person name="Robinson C.V."/>
        </authorList>
    </citation>
    <scope>IDENTIFICATION IN THE EIF-3 COMPLEX</scope>
    <scope>CHARACTERIZATION OF THE EIF-3 COMPLEX</scope>
    <scope>MASS SPECTROMETRY</scope>
    <scope>INTERACTION WITH EIF3B</scope>
</reference>
<reference key="27">
    <citation type="journal article" date="2009" name="Anal. Chem.">
        <title>Lys-N and trypsin cover complementary parts of the phosphoproteome in a refined SCX-based approach.</title>
        <authorList>
            <person name="Gauci S."/>
            <person name="Helbig A.O."/>
            <person name="Slijper M."/>
            <person name="Krijgsveld J."/>
            <person name="Heck A.J."/>
            <person name="Mohammed S."/>
        </authorList>
    </citation>
    <scope>ACETYLATION [LARGE SCALE ANALYSIS] AT ALA-2</scope>
    <scope>CLEAVAGE OF INITIATOR METHIONINE [LARGE SCALE ANALYSIS]</scope>
    <scope>IDENTIFICATION BY MASS SPECTROMETRY [LARGE SCALE ANALYSIS]</scope>
</reference>
<reference key="28">
    <citation type="journal article" date="2010" name="Sci. Signal.">
        <title>Quantitative phosphoproteomics reveals widespread full phosphorylation site occupancy during mitosis.</title>
        <authorList>
            <person name="Olsen J.V."/>
            <person name="Vermeulen M."/>
            <person name="Santamaria A."/>
            <person name="Kumar C."/>
            <person name="Miller M.L."/>
            <person name="Jensen L.J."/>
            <person name="Gnad F."/>
            <person name="Cox J."/>
            <person name="Jensen T.S."/>
            <person name="Nigg E.A."/>
            <person name="Brunak S."/>
            <person name="Mann M."/>
        </authorList>
    </citation>
    <scope>PHOSPHORYLATION [LARGE SCALE ANALYSIS] AT SER-399</scope>
    <scope>IDENTIFICATION BY MASS SPECTROMETRY [LARGE SCALE ANALYSIS]</scope>
    <source>
        <tissue>Cervix carcinoma</tissue>
    </source>
</reference>
<reference key="29">
    <citation type="journal article" date="2011" name="BMC Syst. Biol.">
        <title>Initial characterization of the human central proteome.</title>
        <authorList>
            <person name="Burkard T.R."/>
            <person name="Planyavsky M."/>
            <person name="Kaupe I."/>
            <person name="Breitwieser F.P."/>
            <person name="Buerckstuemmer T."/>
            <person name="Bennett K.L."/>
            <person name="Superti-Furga G."/>
            <person name="Colinge J."/>
        </authorList>
    </citation>
    <scope>IDENTIFICATION BY MASS SPECTROMETRY [LARGE SCALE ANALYSIS]</scope>
</reference>
<reference key="30">
    <citation type="journal article" date="2011" name="Nucleic Acids Res.">
        <title>Mechanisms of translational regulation by a human eIF5-mimic protein.</title>
        <authorList>
            <person name="Singh C.R."/>
            <person name="Watanabe R."/>
            <person name="Zhou D."/>
            <person name="Jennings M.D."/>
            <person name="Fukao A."/>
            <person name="Lee B."/>
            <person name="Ikeda Y."/>
            <person name="Chiorini J.A."/>
            <person name="Campbell S.G."/>
            <person name="Ashe M.P."/>
            <person name="Fujiwara T."/>
            <person name="Wek R.C."/>
            <person name="Pavitt G.D."/>
            <person name="Asano K."/>
        </authorList>
    </citation>
    <scope>INTERACTION WITH BZW2/5MP1</scope>
</reference>
<reference key="31">
    <citation type="journal article" date="2012" name="Mol. Cell. Proteomics">
        <title>Comparative large-scale characterisation of plant vs. mammal proteins reveals similar and idiosyncratic N-alpha acetylation features.</title>
        <authorList>
            <person name="Bienvenut W.V."/>
            <person name="Sumpton D."/>
            <person name="Martinez A."/>
            <person name="Lilla S."/>
            <person name="Espagne C."/>
            <person name="Meinnel T."/>
            <person name="Giglione C."/>
        </authorList>
    </citation>
    <scope>ACETYLATION [LARGE SCALE ANALYSIS] AT ALA-2</scope>
    <scope>CLEAVAGE OF INITIATOR METHIONINE [LARGE SCALE ANALYSIS]</scope>
    <scope>IDENTIFICATION BY MASS SPECTROMETRY [LARGE SCALE ANALYSIS]</scope>
</reference>
<reference key="32">
    <citation type="journal article" date="2012" name="Proc. Natl. Acad. Sci. U.S.A.">
        <title>N-terminal acetylome analyses and functional insights of the N-terminal acetyltransferase NatB.</title>
        <authorList>
            <person name="Van Damme P."/>
            <person name="Lasa M."/>
            <person name="Polevoda B."/>
            <person name="Gazquez C."/>
            <person name="Elosegui-Artola A."/>
            <person name="Kim D.S."/>
            <person name="De Juan-Pardo E."/>
            <person name="Demeyer K."/>
            <person name="Hole K."/>
            <person name="Larrea E."/>
            <person name="Timmerman E."/>
            <person name="Prieto J."/>
            <person name="Arnesen T."/>
            <person name="Sherman F."/>
            <person name="Gevaert K."/>
            <person name="Aldabe R."/>
        </authorList>
    </citation>
    <scope>ACETYLATION [LARGE SCALE ANALYSIS] AT ALA-2</scope>
    <scope>CLEAVAGE OF INITIATOR METHIONINE [LARGE SCALE ANALYSIS]</scope>
    <scope>IDENTIFICATION BY MASS SPECTROMETRY [LARGE SCALE ANALYSIS]</scope>
</reference>
<reference key="33">
    <citation type="journal article" date="2013" name="J. Proteome Res.">
        <title>Toward a comprehensive characterization of a human cancer cell phosphoproteome.</title>
        <authorList>
            <person name="Zhou H."/>
            <person name="Di Palma S."/>
            <person name="Preisinger C."/>
            <person name="Peng M."/>
            <person name="Polat A.N."/>
            <person name="Heck A.J."/>
            <person name="Mohammed S."/>
        </authorList>
    </citation>
    <scope>PHOSPHORYLATION [LARGE SCALE ANALYSIS] AT SER-399</scope>
    <scope>IDENTIFICATION BY MASS SPECTROMETRY [LARGE SCALE ANALYSIS]</scope>
    <source>
        <tissue>Cervix carcinoma</tissue>
        <tissue>Erythroleukemia</tissue>
    </source>
</reference>
<reference key="34">
    <citation type="journal article" date="2014" name="J. Proteomics">
        <title>An enzyme assisted RP-RPLC approach for in-depth analysis of human liver phosphoproteome.</title>
        <authorList>
            <person name="Bian Y."/>
            <person name="Song C."/>
            <person name="Cheng K."/>
            <person name="Dong M."/>
            <person name="Wang F."/>
            <person name="Huang J."/>
            <person name="Sun D."/>
            <person name="Wang L."/>
            <person name="Ye M."/>
            <person name="Zou H."/>
        </authorList>
    </citation>
    <scope>PHOSPHORYLATION [LARGE SCALE ANALYSIS] AT SER-442</scope>
    <scope>IDENTIFICATION BY MASS SPECTROMETRY [LARGE SCALE ANALYSIS]</scope>
    <source>
        <tissue>Liver</tissue>
    </source>
</reference>
<reference key="35">
    <citation type="journal article" date="2015" name="Nature">
        <title>eIF3 targets cell-proliferation messenger RNAs for translational activation or repression.</title>
        <authorList>
            <person name="Lee A.S."/>
            <person name="Kranzusch P.J."/>
            <person name="Cate J.H."/>
        </authorList>
    </citation>
    <scope>FUNCTION</scope>
    <scope>IDENTIFICATION IN THE EIF-3 COMPLEX</scope>
</reference>
<reference key="36">
    <citation type="journal article" date="2015" name="Proteomics">
        <title>N-terminome analysis of the human mitochondrial proteome.</title>
        <authorList>
            <person name="Vaca Jacome A.S."/>
            <person name="Rabilloud T."/>
            <person name="Schaeffer-Reiss C."/>
            <person name="Rompais M."/>
            <person name="Ayoub D."/>
            <person name="Lane L."/>
            <person name="Bairoch A."/>
            <person name="Van Dorsselaer A."/>
            <person name="Carapito C."/>
        </authorList>
    </citation>
    <scope>IDENTIFICATION BY MASS SPECTROMETRY [LARGE SCALE ANALYSIS]</scope>
</reference>
<reference key="37">
    <citation type="journal article" date="2016" name="Nature">
        <title>eIF3d is an mRNA cap-binding protein that is required for specialized translation initiation.</title>
        <authorList>
            <person name="Lee A.S."/>
            <person name="Kranzusch P.J."/>
            <person name="Doudna J.A."/>
            <person name="Cate J.H."/>
        </authorList>
    </citation>
    <scope>FUNCTION</scope>
</reference>
<reference key="38">
    <citation type="journal article" date="2005" name="Science">
        <title>Structural roles for human translation factor eIF3 in initiation of protein synthesis.</title>
        <authorList>
            <person name="Siridechadilok B."/>
            <person name="Fraser C.S."/>
            <person name="Hall R.J."/>
            <person name="Doudna J.A."/>
            <person name="Nogales E."/>
        </authorList>
    </citation>
    <scope>3D-STRUCTURE MODELING</scope>
    <scope>ELECTRON MICROSCOPY</scope>
</reference>
<gene>
    <name evidence="2" type="primary">EIF3E</name>
    <name evidence="2" type="synonym">EIF3S6</name>
    <name evidence="2" type="synonym">INT6</name>
</gene>
<proteinExistence type="evidence at protein level"/>
<protein>
    <recommendedName>
        <fullName evidence="2">Eukaryotic translation initiation factor 3 subunit E</fullName>
        <shortName evidence="2">eIF3e</shortName>
    </recommendedName>
    <alternativeName>
        <fullName evidence="2">Eukaryotic translation initiation factor 3 subunit 6</fullName>
    </alternativeName>
    <alternativeName>
        <fullName>Viral integration site protein INT-6 homolog</fullName>
    </alternativeName>
    <alternativeName>
        <fullName evidence="2">eIF-3 p48</fullName>
    </alternativeName>
</protein>
<sequence>MAEYDLTTRIAHFLDRHLVFPLLEFLSVKEIYNEKELLQGKLDLLSDTNMVDFAMDVYKNLYSDDIPHALREKRTTVVAQLKQLQAETEPIVKMFEDPETTRQMQSTRDGRMLFDYLADKHGFRQEYLDTLYRYAKFQYECGNYSGAAEYLYFFRVLVPATDRNALSSLWGKLASEILMQNWDAAMEDLTRLKETIDNNSVSSPLQSLQQRTWLIHWSLFVFFNHPKGRDNIIDLFLYQPQYLNAIQTMCPHILRYLTTAVITNKDVRKRRQVLKDLVKVIQQESYTYKDPITEFVECLYVNFDFDGAQKKLRECESVLVNDFFLVACLEDFIENARLFIFETFCRIHQCISINMLADKLNMTPEEAERWIVNLIRNARLDAKIDSKLGHVVMGNNAVSPYQQVIEKTKSLSFRSQMLAMNIEKKLNQNSRSEAPNWATQDSGFY</sequence>
<accession>P60228</accession>
<accession>O43902</accession>
<accession>Q64058</accession>
<accession>Q64059</accession>
<accession>Q64252</accession>
<accession>Q6FG33</accession>
<accession>Q8WVK4</accession>
<evidence type="ECO:0000250" key="1">
    <source>
        <dbReference type="UniProtKB" id="P60229"/>
    </source>
</evidence>
<evidence type="ECO:0000255" key="2">
    <source>
        <dbReference type="HAMAP-Rule" id="MF_03004"/>
    </source>
</evidence>
<evidence type="ECO:0000255" key="3">
    <source>
        <dbReference type="PROSITE-ProRule" id="PRU01185"/>
    </source>
</evidence>
<evidence type="ECO:0000269" key="4">
    <source>
    </source>
</evidence>
<evidence type="ECO:0000269" key="5">
    <source>
    </source>
</evidence>
<evidence type="ECO:0000269" key="6">
    <source>
    </source>
</evidence>
<evidence type="ECO:0000269" key="7">
    <source>
    </source>
</evidence>
<evidence type="ECO:0000269" key="8">
    <source>
    </source>
</evidence>
<evidence type="ECO:0000269" key="9">
    <source>
    </source>
</evidence>
<evidence type="ECO:0000269" key="10">
    <source>
    </source>
</evidence>
<evidence type="ECO:0000269" key="11">
    <source>
    </source>
</evidence>
<evidence type="ECO:0000269" key="12">
    <source>
    </source>
</evidence>
<evidence type="ECO:0000269" key="13">
    <source>
    </source>
</evidence>
<evidence type="ECO:0000269" key="14">
    <source>
    </source>
</evidence>
<evidence type="ECO:0000269" key="15">
    <source>
    </source>
</evidence>
<evidence type="ECO:0000269" key="16">
    <source>
    </source>
</evidence>
<evidence type="ECO:0000269" key="17">
    <source>
    </source>
</evidence>
<evidence type="ECO:0000269" key="18">
    <source>
    </source>
</evidence>
<evidence type="ECO:0000269" key="19">
    <source>
    </source>
</evidence>
<evidence type="ECO:0000269" key="20">
    <source>
    </source>
</evidence>
<evidence type="ECO:0000269" key="21">
    <source>
    </source>
</evidence>
<evidence type="ECO:0000269" key="22">
    <source>
    </source>
</evidence>
<evidence type="ECO:0000269" key="23">
    <source>
    </source>
</evidence>
<evidence type="ECO:0000269" key="24">
    <source>
    </source>
</evidence>
<evidence type="ECO:0000269" key="25">
    <source ref="8"/>
</evidence>
<evidence type="ECO:0007744" key="26">
    <source>
    </source>
</evidence>
<evidence type="ECO:0007744" key="27">
    <source>
    </source>
</evidence>
<evidence type="ECO:0007744" key="28">
    <source>
    </source>
</evidence>
<evidence type="ECO:0007744" key="29">
    <source>
    </source>
</evidence>
<evidence type="ECO:0007744" key="30">
    <source>
    </source>
</evidence>
<evidence type="ECO:0007744" key="31">
    <source>
    </source>
</evidence>
<evidence type="ECO:0007744" key="32">
    <source>
    </source>
</evidence>
<evidence type="ECO:0007829" key="33">
    <source>
        <dbReference type="PDB" id="6YBD"/>
    </source>
</evidence>
<evidence type="ECO:0007829" key="34">
    <source>
        <dbReference type="PDB" id="8RG0"/>
    </source>
</evidence>